<protein>
    <recommendedName>
        <fullName evidence="1">Mannitol-1-phosphate 5-dehydrogenase</fullName>
        <ecNumber evidence="1">1.1.1.17</ecNumber>
    </recommendedName>
</protein>
<sequence length="368" mass="40936">MKAVHFGAGNIGRGFIGYILADNNVKVTFADVNEEIINALAHDHQYDVILADESKTTTRVNNVDAINSMQPSEALKQAILEADIITTAVGVNILPIIAKSFAPFLKEKTNHVNIVACENAIMATDTLKKAVLDITGPLGNNIHFANSAVDRIVPLQKNENILDVMVEPFYEWVVEKDAWYGPELNHIKYVDDLTPYIERKLLTVNTGHAYLAYAGKFAGKATVLDAVKDSSIEAGLRRVLAETSQYITNEFDFTEAEQAGYVEKIIDRFNNSYLSDEVTRVGRGTLRKIGPKDRIIKPLTYLYNKDLERTGLLNTAALLLKYDDTADQETVEKNNYIKEHGLKAFLSEYAKVDDGLADEIIEAYNSLS</sequence>
<organism>
    <name type="scientific">Staphylococcus aureus (strain Mu3 / ATCC 700698)</name>
    <dbReference type="NCBI Taxonomy" id="418127"/>
    <lineage>
        <taxon>Bacteria</taxon>
        <taxon>Bacillati</taxon>
        <taxon>Bacillota</taxon>
        <taxon>Bacilli</taxon>
        <taxon>Bacillales</taxon>
        <taxon>Staphylococcaceae</taxon>
        <taxon>Staphylococcus</taxon>
    </lineage>
</organism>
<keyword id="KW-0520">NAD</keyword>
<keyword id="KW-0560">Oxidoreductase</keyword>
<proteinExistence type="inferred from homology"/>
<reference key="1">
    <citation type="journal article" date="2008" name="Antimicrob. Agents Chemother.">
        <title>Mutated response regulator graR is responsible for phenotypic conversion of Staphylococcus aureus from heterogeneous vancomycin-intermediate resistance to vancomycin-intermediate resistance.</title>
        <authorList>
            <person name="Neoh H.-M."/>
            <person name="Cui L."/>
            <person name="Yuzawa H."/>
            <person name="Takeuchi F."/>
            <person name="Matsuo M."/>
            <person name="Hiramatsu K."/>
        </authorList>
    </citation>
    <scope>NUCLEOTIDE SEQUENCE [LARGE SCALE GENOMIC DNA]</scope>
    <source>
        <strain>Mu3 / ATCC 700698</strain>
    </source>
</reference>
<name>MTLD_STAA1</name>
<feature type="chain" id="PRO_1000011812" description="Mannitol-1-phosphate 5-dehydrogenase">
    <location>
        <begin position="1"/>
        <end position="368"/>
    </location>
</feature>
<feature type="binding site" evidence="1">
    <location>
        <begin position="3"/>
        <end position="14"/>
    </location>
    <ligand>
        <name>NAD(+)</name>
        <dbReference type="ChEBI" id="CHEBI:57540"/>
    </ligand>
</feature>
<evidence type="ECO:0000255" key="1">
    <source>
        <dbReference type="HAMAP-Rule" id="MF_00196"/>
    </source>
</evidence>
<comment type="catalytic activity">
    <reaction evidence="1">
        <text>D-mannitol 1-phosphate + NAD(+) = beta-D-fructose 6-phosphate + NADH + H(+)</text>
        <dbReference type="Rhea" id="RHEA:19661"/>
        <dbReference type="ChEBI" id="CHEBI:15378"/>
        <dbReference type="ChEBI" id="CHEBI:57540"/>
        <dbReference type="ChEBI" id="CHEBI:57634"/>
        <dbReference type="ChEBI" id="CHEBI:57945"/>
        <dbReference type="ChEBI" id="CHEBI:61381"/>
        <dbReference type="EC" id="1.1.1.17"/>
    </reaction>
</comment>
<comment type="similarity">
    <text evidence="1">Belongs to the mannitol dehydrogenase family.</text>
</comment>
<gene>
    <name evidence="1" type="primary">mtlD</name>
    <name type="ordered locus">SAHV_2143</name>
</gene>
<dbReference type="EC" id="1.1.1.17" evidence="1"/>
<dbReference type="EMBL" id="AP009324">
    <property type="protein sequence ID" value="BAF79026.1"/>
    <property type="molecule type" value="Genomic_DNA"/>
</dbReference>
<dbReference type="RefSeq" id="WP_000648723.1">
    <property type="nucleotide sequence ID" value="NC_009782.1"/>
</dbReference>
<dbReference type="SMR" id="A7X522"/>
<dbReference type="KEGG" id="saw:SAHV_2143"/>
<dbReference type="HOGENOM" id="CLU_036089_2_0_9"/>
<dbReference type="GO" id="GO:0005829">
    <property type="term" value="C:cytosol"/>
    <property type="evidence" value="ECO:0007669"/>
    <property type="project" value="TreeGrafter"/>
</dbReference>
<dbReference type="GO" id="GO:0008926">
    <property type="term" value="F:mannitol-1-phosphate 5-dehydrogenase activity"/>
    <property type="evidence" value="ECO:0007669"/>
    <property type="project" value="UniProtKB-UniRule"/>
</dbReference>
<dbReference type="GO" id="GO:0019592">
    <property type="term" value="P:mannitol catabolic process"/>
    <property type="evidence" value="ECO:0007669"/>
    <property type="project" value="TreeGrafter"/>
</dbReference>
<dbReference type="FunFam" id="3.40.50.720:FF:000316">
    <property type="entry name" value="Mannitol-1-phosphate 5-dehydrogenase"/>
    <property type="match status" value="1"/>
</dbReference>
<dbReference type="Gene3D" id="1.10.1040.10">
    <property type="entry name" value="N-(1-d-carboxylethyl)-l-norvaline Dehydrogenase, domain 2"/>
    <property type="match status" value="1"/>
</dbReference>
<dbReference type="Gene3D" id="3.40.50.720">
    <property type="entry name" value="NAD(P)-binding Rossmann-like Domain"/>
    <property type="match status" value="1"/>
</dbReference>
<dbReference type="HAMAP" id="MF_00196">
    <property type="entry name" value="Mannitol_dehydrog"/>
    <property type="match status" value="1"/>
</dbReference>
<dbReference type="InterPro" id="IPR008927">
    <property type="entry name" value="6-PGluconate_DH-like_C_sf"/>
</dbReference>
<dbReference type="InterPro" id="IPR013328">
    <property type="entry name" value="6PGD_dom2"/>
</dbReference>
<dbReference type="InterPro" id="IPR023028">
    <property type="entry name" value="Mannitol_1_phos_5_DH"/>
</dbReference>
<dbReference type="InterPro" id="IPR000669">
    <property type="entry name" value="Mannitol_DH"/>
</dbReference>
<dbReference type="InterPro" id="IPR013118">
    <property type="entry name" value="Mannitol_DH_C"/>
</dbReference>
<dbReference type="InterPro" id="IPR023027">
    <property type="entry name" value="Mannitol_DH_CS"/>
</dbReference>
<dbReference type="InterPro" id="IPR013131">
    <property type="entry name" value="Mannitol_DH_N"/>
</dbReference>
<dbReference type="InterPro" id="IPR036291">
    <property type="entry name" value="NAD(P)-bd_dom_sf"/>
</dbReference>
<dbReference type="NCBIfam" id="NF002645">
    <property type="entry name" value="PRK02318.1-1"/>
    <property type="match status" value="1"/>
</dbReference>
<dbReference type="NCBIfam" id="NF002652">
    <property type="entry name" value="PRK02318.2-5"/>
    <property type="match status" value="1"/>
</dbReference>
<dbReference type="PANTHER" id="PTHR30524:SF0">
    <property type="entry name" value="ALTRONATE OXIDOREDUCTASE-RELATED"/>
    <property type="match status" value="1"/>
</dbReference>
<dbReference type="PANTHER" id="PTHR30524">
    <property type="entry name" value="MANNITOL-1-PHOSPHATE 5-DEHYDROGENASE"/>
    <property type="match status" value="1"/>
</dbReference>
<dbReference type="Pfam" id="PF01232">
    <property type="entry name" value="Mannitol_dh"/>
    <property type="match status" value="1"/>
</dbReference>
<dbReference type="Pfam" id="PF08125">
    <property type="entry name" value="Mannitol_dh_C"/>
    <property type="match status" value="1"/>
</dbReference>
<dbReference type="PRINTS" id="PR00084">
    <property type="entry name" value="MTLDHDRGNASE"/>
</dbReference>
<dbReference type="SUPFAM" id="SSF48179">
    <property type="entry name" value="6-phosphogluconate dehydrogenase C-terminal domain-like"/>
    <property type="match status" value="1"/>
</dbReference>
<dbReference type="SUPFAM" id="SSF51735">
    <property type="entry name" value="NAD(P)-binding Rossmann-fold domains"/>
    <property type="match status" value="1"/>
</dbReference>
<dbReference type="PROSITE" id="PS00974">
    <property type="entry name" value="MANNITOL_DHGENASE"/>
    <property type="match status" value="1"/>
</dbReference>
<accession>A7X522</accession>